<dbReference type="EMBL" id="CP000964">
    <property type="protein sequence ID" value="ACI08498.1"/>
    <property type="molecule type" value="Genomic_DNA"/>
</dbReference>
<dbReference type="KEGG" id="kpe:KPK_0929"/>
<dbReference type="HOGENOM" id="CLU_136197_2_0_6"/>
<dbReference type="UniPathway" id="UPA00148"/>
<dbReference type="Proteomes" id="UP000001734">
    <property type="component" value="Chromosome"/>
</dbReference>
<dbReference type="GO" id="GO:0005886">
    <property type="term" value="C:plasma membrane"/>
    <property type="evidence" value="ECO:0007669"/>
    <property type="project" value="UniProtKB-SubCell"/>
</dbReference>
<dbReference type="GO" id="GO:0015087">
    <property type="term" value="F:cobalt ion transmembrane transporter activity"/>
    <property type="evidence" value="ECO:0007669"/>
    <property type="project" value="UniProtKB-UniRule"/>
</dbReference>
<dbReference type="GO" id="GO:0009236">
    <property type="term" value="P:cobalamin biosynthetic process"/>
    <property type="evidence" value="ECO:0007669"/>
    <property type="project" value="UniProtKB-UniRule"/>
</dbReference>
<dbReference type="HAMAP" id="MF_00330">
    <property type="entry name" value="CbiN"/>
    <property type="match status" value="1"/>
</dbReference>
<dbReference type="InterPro" id="IPR003705">
    <property type="entry name" value="CbiN"/>
</dbReference>
<dbReference type="NCBIfam" id="TIGR01165">
    <property type="entry name" value="cbiN"/>
    <property type="match status" value="1"/>
</dbReference>
<dbReference type="NCBIfam" id="NF002780">
    <property type="entry name" value="PRK02898.1"/>
    <property type="match status" value="1"/>
</dbReference>
<dbReference type="PANTHER" id="PTHR38662">
    <property type="entry name" value="COBALT TRANSPORT PROTEIN CBIN"/>
    <property type="match status" value="1"/>
</dbReference>
<dbReference type="PANTHER" id="PTHR38662:SF1">
    <property type="entry name" value="COBALT TRANSPORT PROTEIN CBIN"/>
    <property type="match status" value="1"/>
</dbReference>
<dbReference type="Pfam" id="PF02553">
    <property type="entry name" value="CbiN"/>
    <property type="match status" value="1"/>
</dbReference>
<organism>
    <name type="scientific">Klebsiella pneumoniae (strain 342)</name>
    <dbReference type="NCBI Taxonomy" id="507522"/>
    <lineage>
        <taxon>Bacteria</taxon>
        <taxon>Pseudomonadati</taxon>
        <taxon>Pseudomonadota</taxon>
        <taxon>Gammaproteobacteria</taxon>
        <taxon>Enterobacterales</taxon>
        <taxon>Enterobacteriaceae</taxon>
        <taxon>Klebsiella/Raoultella group</taxon>
        <taxon>Klebsiella</taxon>
        <taxon>Klebsiella pneumoniae complex</taxon>
    </lineage>
</organism>
<reference key="1">
    <citation type="journal article" date="2008" name="PLoS Genet.">
        <title>Complete genome sequence of the N2-fixing broad host range endophyte Klebsiella pneumoniae 342 and virulence predictions verified in mice.</title>
        <authorList>
            <person name="Fouts D.E."/>
            <person name="Tyler H.L."/>
            <person name="DeBoy R.T."/>
            <person name="Daugherty S."/>
            <person name="Ren Q."/>
            <person name="Badger J.H."/>
            <person name="Durkin A.S."/>
            <person name="Huot H."/>
            <person name="Shrivastava S."/>
            <person name="Kothari S."/>
            <person name="Dodson R.J."/>
            <person name="Mohamoud Y."/>
            <person name="Khouri H."/>
            <person name="Roesch L.F.W."/>
            <person name="Krogfelt K.A."/>
            <person name="Struve C."/>
            <person name="Triplett E.W."/>
            <person name="Methe B.A."/>
        </authorList>
    </citation>
    <scope>NUCLEOTIDE SEQUENCE [LARGE SCALE GENOMIC DNA]</scope>
    <source>
        <strain>342</strain>
    </source>
</reference>
<evidence type="ECO:0000255" key="1">
    <source>
        <dbReference type="HAMAP-Rule" id="MF_00330"/>
    </source>
</evidence>
<sequence>MKKPLILLAMVVALMILPFFINHGGEFGGSDGEAESQIQVVAPDYQPWFQPLYEPASGEIESLLFTLQGSLGAAVIFYILGYARGRQRRDDRV</sequence>
<comment type="function">
    <text evidence="1">Part of the energy-coupling factor (ECF) transporter complex CbiMNOQ involved in cobalt import.</text>
</comment>
<comment type="pathway">
    <text evidence="1">Cofactor biosynthesis; adenosylcobalamin biosynthesis.</text>
</comment>
<comment type="subunit">
    <text evidence="1">Forms an energy-coupling factor (ECF) transporter complex composed of an ATP-binding protein (A component, CbiO), a transmembrane protein (T component, CbiQ) and 2 possible substrate-capture proteins (S components, CbiM and CbiN) of unknown stoichimetry.</text>
</comment>
<comment type="subcellular location">
    <subcellularLocation>
        <location evidence="1">Cell inner membrane</location>
        <topology evidence="1">Multi-pass membrane protein</topology>
    </subcellularLocation>
</comment>
<comment type="similarity">
    <text evidence="1">Belongs to the CbiN family.</text>
</comment>
<feature type="chain" id="PRO_1000116107" description="Cobalt transport protein CbiN">
    <location>
        <begin position="1"/>
        <end position="93"/>
    </location>
</feature>
<feature type="transmembrane region" description="Helical" evidence="1">
    <location>
        <begin position="5"/>
        <end position="25"/>
    </location>
</feature>
<feature type="transmembrane region" description="Helical" evidence="1">
    <location>
        <begin position="63"/>
        <end position="83"/>
    </location>
</feature>
<keyword id="KW-0997">Cell inner membrane</keyword>
<keyword id="KW-1003">Cell membrane</keyword>
<keyword id="KW-0169">Cobalamin biosynthesis</keyword>
<keyword id="KW-0170">Cobalt</keyword>
<keyword id="KW-0171">Cobalt transport</keyword>
<keyword id="KW-0406">Ion transport</keyword>
<keyword id="KW-0472">Membrane</keyword>
<keyword id="KW-0812">Transmembrane</keyword>
<keyword id="KW-1133">Transmembrane helix</keyword>
<keyword id="KW-0813">Transport</keyword>
<protein>
    <recommendedName>
        <fullName evidence="1">Cobalt transport protein CbiN</fullName>
    </recommendedName>
    <alternativeName>
        <fullName evidence="1">Energy-coupling factor transporter probable substrate-capture protein CbiN</fullName>
        <shortName evidence="1">ECF transporter S component CbiN</shortName>
    </alternativeName>
</protein>
<gene>
    <name evidence="1" type="primary">cbiN</name>
    <name type="ordered locus">KPK_0929</name>
</gene>
<accession>B5XUV2</accession>
<name>CBIN_KLEP3</name>
<proteinExistence type="inferred from homology"/>